<organism>
    <name type="scientific">Beijerinckia indica subsp. indica (strain ATCC 9039 / DSM 1715 / NCIMB 8712)</name>
    <dbReference type="NCBI Taxonomy" id="395963"/>
    <lineage>
        <taxon>Bacteria</taxon>
        <taxon>Pseudomonadati</taxon>
        <taxon>Pseudomonadota</taxon>
        <taxon>Alphaproteobacteria</taxon>
        <taxon>Hyphomicrobiales</taxon>
        <taxon>Beijerinckiaceae</taxon>
        <taxon>Beijerinckia</taxon>
    </lineage>
</organism>
<reference key="1">
    <citation type="journal article" date="2010" name="J. Bacteriol.">
        <title>Complete genome sequence of Beijerinckia indica subsp. indica.</title>
        <authorList>
            <person name="Tamas I."/>
            <person name="Dedysh S.N."/>
            <person name="Liesack W."/>
            <person name="Stott M.B."/>
            <person name="Alam M."/>
            <person name="Murrell J.C."/>
            <person name="Dunfield P.F."/>
        </authorList>
    </citation>
    <scope>NUCLEOTIDE SEQUENCE [LARGE SCALE GENOMIC DNA]</scope>
    <source>
        <strain>ATCC 9039 / DSM 1715 / NCIMB 8712</strain>
    </source>
</reference>
<accession>B2IJQ3</accession>
<sequence>MTHFAQAEPASLSHAATLETIFAPASGQGRSAVAIVRVSGPKAGFLLGALAGYCPEPRRATLAILHDPENGEALDEALVLWFPGPKSFTGEDCAEFHVHGGRAVMAGLLAALGRFEQVRPAEPGEFTRRALLNGKLDLAEVEGLADMIEAETEWQRRQALRQMRGALSRQAEMWRQALLEALSLAEAEIDFSDEADVPPETSRRVAALIEPVLADLRAELGQARAGERIREGLSIVIMGPPNAGKSTLLNALARREVAIVSEIAGTTRDLIEVHLDLKGCAVVLTDTAGLRDNADKIEQIGIARAYERGREADLVLWLSEAEAPVAPPENLGMEVWPVFTKADRVEPLENREGLAISATSGLHLGRLVEAIADFAGKLAPSGHAGLITRARHRQAFERAAAALDRCIREASPVELLAEDLRLAAQALLSLTGRIETEEILGEIFARFCIGK</sequence>
<dbReference type="EC" id="3.6.-.-" evidence="1"/>
<dbReference type="EMBL" id="CP001016">
    <property type="protein sequence ID" value="ACB94925.1"/>
    <property type="molecule type" value="Genomic_DNA"/>
</dbReference>
<dbReference type="RefSeq" id="WP_012384282.1">
    <property type="nucleotide sequence ID" value="NC_010581.1"/>
</dbReference>
<dbReference type="SMR" id="B2IJQ3"/>
<dbReference type="STRING" id="395963.Bind_1284"/>
<dbReference type="KEGG" id="bid:Bind_1284"/>
<dbReference type="eggNOG" id="COG0486">
    <property type="taxonomic scope" value="Bacteria"/>
</dbReference>
<dbReference type="HOGENOM" id="CLU_019624_3_1_5"/>
<dbReference type="OrthoDB" id="9805918at2"/>
<dbReference type="Proteomes" id="UP000001695">
    <property type="component" value="Chromosome"/>
</dbReference>
<dbReference type="GO" id="GO:0005737">
    <property type="term" value="C:cytoplasm"/>
    <property type="evidence" value="ECO:0007669"/>
    <property type="project" value="UniProtKB-SubCell"/>
</dbReference>
<dbReference type="GO" id="GO:0016887">
    <property type="term" value="F:ATP hydrolysis activity"/>
    <property type="evidence" value="ECO:0007669"/>
    <property type="project" value="InterPro"/>
</dbReference>
<dbReference type="GO" id="GO:0005525">
    <property type="term" value="F:GTP binding"/>
    <property type="evidence" value="ECO:0007669"/>
    <property type="project" value="UniProtKB-UniRule"/>
</dbReference>
<dbReference type="GO" id="GO:0003924">
    <property type="term" value="F:GTPase activity"/>
    <property type="evidence" value="ECO:0007669"/>
    <property type="project" value="UniProtKB-UniRule"/>
</dbReference>
<dbReference type="GO" id="GO:0046872">
    <property type="term" value="F:metal ion binding"/>
    <property type="evidence" value="ECO:0007669"/>
    <property type="project" value="UniProtKB-KW"/>
</dbReference>
<dbReference type="GO" id="GO:0030488">
    <property type="term" value="P:tRNA methylation"/>
    <property type="evidence" value="ECO:0007669"/>
    <property type="project" value="TreeGrafter"/>
</dbReference>
<dbReference type="GO" id="GO:0002098">
    <property type="term" value="P:tRNA wobble uridine modification"/>
    <property type="evidence" value="ECO:0007669"/>
    <property type="project" value="TreeGrafter"/>
</dbReference>
<dbReference type="CDD" id="cd04164">
    <property type="entry name" value="trmE"/>
    <property type="match status" value="1"/>
</dbReference>
<dbReference type="CDD" id="cd14858">
    <property type="entry name" value="TrmE_N"/>
    <property type="match status" value="1"/>
</dbReference>
<dbReference type="FunFam" id="3.30.1360.120:FF:000007">
    <property type="entry name" value="tRNA modification GTPase GTPBP3, mitochondrial"/>
    <property type="match status" value="1"/>
</dbReference>
<dbReference type="Gene3D" id="3.40.50.300">
    <property type="entry name" value="P-loop containing nucleotide triphosphate hydrolases"/>
    <property type="match status" value="1"/>
</dbReference>
<dbReference type="Gene3D" id="3.30.1360.120">
    <property type="entry name" value="Probable tRNA modification gtpase trme, domain 1"/>
    <property type="match status" value="1"/>
</dbReference>
<dbReference type="Gene3D" id="1.20.120.430">
    <property type="entry name" value="tRNA modification GTPase MnmE domain 2"/>
    <property type="match status" value="1"/>
</dbReference>
<dbReference type="HAMAP" id="MF_00379">
    <property type="entry name" value="GTPase_MnmE"/>
    <property type="match status" value="1"/>
</dbReference>
<dbReference type="InterPro" id="IPR003593">
    <property type="entry name" value="AAA+_ATPase"/>
</dbReference>
<dbReference type="InterPro" id="IPR031168">
    <property type="entry name" value="G_TrmE"/>
</dbReference>
<dbReference type="InterPro" id="IPR006073">
    <property type="entry name" value="GTP-bd"/>
</dbReference>
<dbReference type="InterPro" id="IPR018948">
    <property type="entry name" value="GTP-bd_TrmE_N"/>
</dbReference>
<dbReference type="InterPro" id="IPR004520">
    <property type="entry name" value="GTPase_MnmE"/>
</dbReference>
<dbReference type="InterPro" id="IPR027368">
    <property type="entry name" value="MnmE_dom2"/>
</dbReference>
<dbReference type="InterPro" id="IPR025867">
    <property type="entry name" value="MnmE_helical"/>
</dbReference>
<dbReference type="InterPro" id="IPR027417">
    <property type="entry name" value="P-loop_NTPase"/>
</dbReference>
<dbReference type="InterPro" id="IPR005225">
    <property type="entry name" value="Small_GTP-bd"/>
</dbReference>
<dbReference type="InterPro" id="IPR027266">
    <property type="entry name" value="TrmE/GcvT_dom1"/>
</dbReference>
<dbReference type="NCBIfam" id="TIGR00450">
    <property type="entry name" value="mnmE_trmE_thdF"/>
    <property type="match status" value="1"/>
</dbReference>
<dbReference type="NCBIfam" id="NF003661">
    <property type="entry name" value="PRK05291.1-3"/>
    <property type="match status" value="1"/>
</dbReference>
<dbReference type="NCBIfam" id="TIGR00231">
    <property type="entry name" value="small_GTP"/>
    <property type="match status" value="1"/>
</dbReference>
<dbReference type="PANTHER" id="PTHR42714">
    <property type="entry name" value="TRNA MODIFICATION GTPASE GTPBP3"/>
    <property type="match status" value="1"/>
</dbReference>
<dbReference type="PANTHER" id="PTHR42714:SF2">
    <property type="entry name" value="TRNA MODIFICATION GTPASE GTPBP3, MITOCHONDRIAL"/>
    <property type="match status" value="1"/>
</dbReference>
<dbReference type="Pfam" id="PF01926">
    <property type="entry name" value="MMR_HSR1"/>
    <property type="match status" value="1"/>
</dbReference>
<dbReference type="Pfam" id="PF12631">
    <property type="entry name" value="MnmE_helical"/>
    <property type="match status" value="1"/>
</dbReference>
<dbReference type="Pfam" id="PF10396">
    <property type="entry name" value="TrmE_N"/>
    <property type="match status" value="1"/>
</dbReference>
<dbReference type="PRINTS" id="PR00326">
    <property type="entry name" value="GTP1OBG"/>
</dbReference>
<dbReference type="SMART" id="SM00382">
    <property type="entry name" value="AAA"/>
    <property type="match status" value="1"/>
</dbReference>
<dbReference type="SUPFAM" id="SSF52540">
    <property type="entry name" value="P-loop containing nucleoside triphosphate hydrolases"/>
    <property type="match status" value="1"/>
</dbReference>
<dbReference type="SUPFAM" id="SSF116878">
    <property type="entry name" value="TrmE connector domain"/>
    <property type="match status" value="1"/>
</dbReference>
<dbReference type="PROSITE" id="PS51709">
    <property type="entry name" value="G_TRME"/>
    <property type="match status" value="1"/>
</dbReference>
<comment type="function">
    <text evidence="1">Exhibits a very high intrinsic GTPase hydrolysis rate. Involved in the addition of a carboxymethylaminomethyl (cmnm) group at the wobble position (U34) of certain tRNAs, forming tRNA-cmnm(5)s(2)U34.</text>
</comment>
<comment type="cofactor">
    <cofactor evidence="1">
        <name>K(+)</name>
        <dbReference type="ChEBI" id="CHEBI:29103"/>
    </cofactor>
    <text evidence="1">Binds 1 potassium ion per subunit.</text>
</comment>
<comment type="subunit">
    <text evidence="1">Homodimer. Heterotetramer of two MnmE and two MnmG subunits.</text>
</comment>
<comment type="subcellular location">
    <subcellularLocation>
        <location evidence="1">Cytoplasm</location>
    </subcellularLocation>
</comment>
<comment type="similarity">
    <text evidence="1">Belongs to the TRAFAC class TrmE-Era-EngA-EngB-Septin-like GTPase superfamily. TrmE GTPase family.</text>
</comment>
<protein>
    <recommendedName>
        <fullName evidence="1">tRNA modification GTPase MnmE</fullName>
        <ecNumber evidence="1">3.6.-.-</ecNumber>
    </recommendedName>
</protein>
<proteinExistence type="inferred from homology"/>
<gene>
    <name evidence="1" type="primary">mnmE</name>
    <name evidence="1" type="synonym">trmE</name>
    <name type="ordered locus">Bind_1284</name>
</gene>
<name>MNME_BEII9</name>
<feature type="chain" id="PRO_0000345721" description="tRNA modification GTPase MnmE">
    <location>
        <begin position="1"/>
        <end position="451"/>
    </location>
</feature>
<feature type="domain" description="TrmE-type G">
    <location>
        <begin position="232"/>
        <end position="376"/>
    </location>
</feature>
<feature type="binding site" evidence="1">
    <location>
        <position position="37"/>
    </location>
    <ligand>
        <name>(6S)-5-formyl-5,6,7,8-tetrahydrofolate</name>
        <dbReference type="ChEBI" id="CHEBI:57457"/>
    </ligand>
</feature>
<feature type="binding site" evidence="1">
    <location>
        <position position="95"/>
    </location>
    <ligand>
        <name>(6S)-5-formyl-5,6,7,8-tetrahydrofolate</name>
        <dbReference type="ChEBI" id="CHEBI:57457"/>
    </ligand>
</feature>
<feature type="binding site" evidence="1">
    <location>
        <position position="135"/>
    </location>
    <ligand>
        <name>(6S)-5-formyl-5,6,7,8-tetrahydrofolate</name>
        <dbReference type="ChEBI" id="CHEBI:57457"/>
    </ligand>
</feature>
<feature type="binding site" evidence="1">
    <location>
        <begin position="242"/>
        <end position="247"/>
    </location>
    <ligand>
        <name>GTP</name>
        <dbReference type="ChEBI" id="CHEBI:37565"/>
    </ligand>
</feature>
<feature type="binding site" evidence="1">
    <location>
        <position position="242"/>
    </location>
    <ligand>
        <name>K(+)</name>
        <dbReference type="ChEBI" id="CHEBI:29103"/>
    </ligand>
</feature>
<feature type="binding site" evidence="1">
    <location>
        <position position="246"/>
    </location>
    <ligand>
        <name>Mg(2+)</name>
        <dbReference type="ChEBI" id="CHEBI:18420"/>
    </ligand>
</feature>
<feature type="binding site" evidence="1">
    <location>
        <begin position="261"/>
        <end position="267"/>
    </location>
    <ligand>
        <name>GTP</name>
        <dbReference type="ChEBI" id="CHEBI:37565"/>
    </ligand>
</feature>
<feature type="binding site" evidence="1">
    <location>
        <position position="261"/>
    </location>
    <ligand>
        <name>K(+)</name>
        <dbReference type="ChEBI" id="CHEBI:29103"/>
    </ligand>
</feature>
<feature type="binding site" evidence="1">
    <location>
        <position position="263"/>
    </location>
    <ligand>
        <name>K(+)</name>
        <dbReference type="ChEBI" id="CHEBI:29103"/>
    </ligand>
</feature>
<feature type="binding site" evidence="1">
    <location>
        <position position="266"/>
    </location>
    <ligand>
        <name>K(+)</name>
        <dbReference type="ChEBI" id="CHEBI:29103"/>
    </ligand>
</feature>
<feature type="binding site" evidence="1">
    <location>
        <position position="267"/>
    </location>
    <ligand>
        <name>Mg(2+)</name>
        <dbReference type="ChEBI" id="CHEBI:18420"/>
    </ligand>
</feature>
<feature type="binding site" evidence="1">
    <location>
        <begin position="286"/>
        <end position="289"/>
    </location>
    <ligand>
        <name>GTP</name>
        <dbReference type="ChEBI" id="CHEBI:37565"/>
    </ligand>
</feature>
<feature type="binding site" evidence="1">
    <location>
        <position position="451"/>
    </location>
    <ligand>
        <name>(6S)-5-formyl-5,6,7,8-tetrahydrofolate</name>
        <dbReference type="ChEBI" id="CHEBI:57457"/>
    </ligand>
</feature>
<evidence type="ECO:0000255" key="1">
    <source>
        <dbReference type="HAMAP-Rule" id="MF_00379"/>
    </source>
</evidence>
<keyword id="KW-0963">Cytoplasm</keyword>
<keyword id="KW-0342">GTP-binding</keyword>
<keyword id="KW-0378">Hydrolase</keyword>
<keyword id="KW-0460">Magnesium</keyword>
<keyword id="KW-0479">Metal-binding</keyword>
<keyword id="KW-0547">Nucleotide-binding</keyword>
<keyword id="KW-0630">Potassium</keyword>
<keyword id="KW-1185">Reference proteome</keyword>
<keyword id="KW-0819">tRNA processing</keyword>